<proteinExistence type="inferred from homology"/>
<name>RLMF_YERPE</name>
<evidence type="ECO:0000255" key="1">
    <source>
        <dbReference type="HAMAP-Rule" id="MF_01848"/>
    </source>
</evidence>
<evidence type="ECO:0000305" key="2"/>
<organism>
    <name type="scientific">Yersinia pestis</name>
    <dbReference type="NCBI Taxonomy" id="632"/>
    <lineage>
        <taxon>Bacteria</taxon>
        <taxon>Pseudomonadati</taxon>
        <taxon>Pseudomonadota</taxon>
        <taxon>Gammaproteobacteria</taxon>
        <taxon>Enterobacterales</taxon>
        <taxon>Yersiniaceae</taxon>
        <taxon>Yersinia</taxon>
    </lineage>
</organism>
<feature type="chain" id="PRO_0000349981" description="Ribosomal RNA large subunit methyltransferase F">
    <location>
        <begin position="1"/>
        <end position="336"/>
    </location>
</feature>
<feature type="sequence conflict" description="In Ref. 3; AAS62537." evidence="2" ref="3">
    <original>C</original>
    <variation>R</variation>
    <location>
        <position position="36"/>
    </location>
</feature>
<reference key="1">
    <citation type="journal article" date="2001" name="Nature">
        <title>Genome sequence of Yersinia pestis, the causative agent of plague.</title>
        <authorList>
            <person name="Parkhill J."/>
            <person name="Wren B.W."/>
            <person name="Thomson N.R."/>
            <person name="Titball R.W."/>
            <person name="Holden M.T.G."/>
            <person name="Prentice M.B."/>
            <person name="Sebaihia M."/>
            <person name="James K.D."/>
            <person name="Churcher C.M."/>
            <person name="Mungall K.L."/>
            <person name="Baker S."/>
            <person name="Basham D."/>
            <person name="Bentley S.D."/>
            <person name="Brooks K."/>
            <person name="Cerdeno-Tarraga A.-M."/>
            <person name="Chillingworth T."/>
            <person name="Cronin A."/>
            <person name="Davies R.M."/>
            <person name="Davis P."/>
            <person name="Dougan G."/>
            <person name="Feltwell T."/>
            <person name="Hamlin N."/>
            <person name="Holroyd S."/>
            <person name="Jagels K."/>
            <person name="Karlyshev A.V."/>
            <person name="Leather S."/>
            <person name="Moule S."/>
            <person name="Oyston P.C.F."/>
            <person name="Quail M.A."/>
            <person name="Rutherford K.M."/>
            <person name="Simmonds M."/>
            <person name="Skelton J."/>
            <person name="Stevens K."/>
            <person name="Whitehead S."/>
            <person name="Barrell B.G."/>
        </authorList>
    </citation>
    <scope>NUCLEOTIDE SEQUENCE [LARGE SCALE GENOMIC DNA]</scope>
    <source>
        <strain>CO-92 / Biovar Orientalis</strain>
    </source>
</reference>
<reference key="2">
    <citation type="journal article" date="2002" name="J. Bacteriol.">
        <title>Genome sequence of Yersinia pestis KIM.</title>
        <authorList>
            <person name="Deng W."/>
            <person name="Burland V."/>
            <person name="Plunkett G. III"/>
            <person name="Boutin A."/>
            <person name="Mayhew G.F."/>
            <person name="Liss P."/>
            <person name="Perna N.T."/>
            <person name="Rose D.J."/>
            <person name="Mau B."/>
            <person name="Zhou S."/>
            <person name="Schwartz D.C."/>
            <person name="Fetherston J.D."/>
            <person name="Lindler L.E."/>
            <person name="Brubaker R.R."/>
            <person name="Plano G.V."/>
            <person name="Straley S.C."/>
            <person name="McDonough K.A."/>
            <person name="Nilles M.L."/>
            <person name="Matson J.S."/>
            <person name="Blattner F.R."/>
            <person name="Perry R.D."/>
        </authorList>
    </citation>
    <scope>NUCLEOTIDE SEQUENCE [LARGE SCALE GENOMIC DNA]</scope>
    <source>
        <strain>KIM10+ / Biovar Mediaevalis</strain>
    </source>
</reference>
<reference key="3">
    <citation type="journal article" date="2004" name="DNA Res.">
        <title>Complete genome sequence of Yersinia pestis strain 91001, an isolate avirulent to humans.</title>
        <authorList>
            <person name="Song Y."/>
            <person name="Tong Z."/>
            <person name="Wang J."/>
            <person name="Wang L."/>
            <person name="Guo Z."/>
            <person name="Han Y."/>
            <person name="Zhang J."/>
            <person name="Pei D."/>
            <person name="Zhou D."/>
            <person name="Qin H."/>
            <person name="Pang X."/>
            <person name="Han Y."/>
            <person name="Zhai J."/>
            <person name="Li M."/>
            <person name="Cui B."/>
            <person name="Qi Z."/>
            <person name="Jin L."/>
            <person name="Dai R."/>
            <person name="Chen F."/>
            <person name="Li S."/>
            <person name="Ye C."/>
            <person name="Du Z."/>
            <person name="Lin W."/>
            <person name="Wang J."/>
            <person name="Yu J."/>
            <person name="Yang H."/>
            <person name="Wang J."/>
            <person name="Huang P."/>
            <person name="Yang R."/>
        </authorList>
    </citation>
    <scope>NUCLEOTIDE SEQUENCE [LARGE SCALE GENOMIC DNA]</scope>
    <source>
        <strain>91001 / Biovar Mediaevalis</strain>
    </source>
</reference>
<comment type="function">
    <text evidence="1">Specifically methylates the adenine in position 1618 of 23S rRNA.</text>
</comment>
<comment type="catalytic activity">
    <reaction evidence="1">
        <text>adenosine(1618) in 23S rRNA + S-adenosyl-L-methionine = N(6)-methyladenosine(1618) in 23S rRNA + S-adenosyl-L-homocysteine + H(+)</text>
        <dbReference type="Rhea" id="RHEA:16497"/>
        <dbReference type="Rhea" id="RHEA-COMP:10229"/>
        <dbReference type="Rhea" id="RHEA-COMP:10231"/>
        <dbReference type="ChEBI" id="CHEBI:15378"/>
        <dbReference type="ChEBI" id="CHEBI:57856"/>
        <dbReference type="ChEBI" id="CHEBI:59789"/>
        <dbReference type="ChEBI" id="CHEBI:74411"/>
        <dbReference type="ChEBI" id="CHEBI:74449"/>
        <dbReference type="EC" id="2.1.1.181"/>
    </reaction>
</comment>
<comment type="subcellular location">
    <subcellularLocation>
        <location evidence="1">Cytoplasm</location>
    </subcellularLocation>
</comment>
<comment type="similarity">
    <text evidence="1">Belongs to the methyltransferase superfamily. METTL16/RlmF family.</text>
</comment>
<accession>Q7CJ72</accession>
<accession>Q74T59</accession>
<gene>
    <name evidence="1" type="primary">rlmF</name>
    <name type="ordered locus">YPO2519</name>
    <name type="ordered locus">y1668</name>
    <name type="ordered locus">YP_2331</name>
</gene>
<keyword id="KW-0963">Cytoplasm</keyword>
<keyword id="KW-0489">Methyltransferase</keyword>
<keyword id="KW-1185">Reference proteome</keyword>
<keyword id="KW-0698">rRNA processing</keyword>
<keyword id="KW-0949">S-adenosyl-L-methionine</keyword>
<keyword id="KW-0808">Transferase</keyword>
<protein>
    <recommendedName>
        <fullName evidence="1">Ribosomal RNA large subunit methyltransferase F</fullName>
        <ecNumber evidence="1">2.1.1.181</ecNumber>
    </recommendedName>
    <alternativeName>
        <fullName evidence="1">23S rRNA mA1618 methyltransferase</fullName>
    </alternativeName>
    <alternativeName>
        <fullName evidence="1">rRNA adenine N-6-methyltransferase</fullName>
    </alternativeName>
</protein>
<sequence length="336" mass="37477">MLSYAPENAYQRASTMENKKVFPKEKSGLHPRNRHCSRYDFDALSVSCPELIPFLAPTAYGDISVDFADPLAVKMLNKALLKHFYGIEYWDIPADSLCPPIPGRADYVHHLADLLASCNGEVIPKGKNIALLDIGVGANCIYPIIGQREYGWRFTGTDIDSHALSAAKMVVSMNPTLKNTLRLKQQKDPHAIFEGVWAVNERYDATLCNPPFHGSAEEAAATTRRKLHKLGKNEVAAKPVQNFGGKNSELWCEGGEEGFVSRMVAESVAKAQNCFWFTSLISKKTTLPAIYHALRYVKAVEVRTIEMAQGQKVSRFVAWTFLTPEQQAAWVAERWA</sequence>
<dbReference type="EC" id="2.1.1.181" evidence="1"/>
<dbReference type="EMBL" id="AL590842">
    <property type="protein sequence ID" value="CAL21146.1"/>
    <property type="molecule type" value="Genomic_DNA"/>
</dbReference>
<dbReference type="EMBL" id="AE009952">
    <property type="protein sequence ID" value="AAM85237.1"/>
    <property type="molecule type" value="Genomic_DNA"/>
</dbReference>
<dbReference type="EMBL" id="AE017042">
    <property type="protein sequence ID" value="AAS62537.1"/>
    <property type="molecule type" value="Genomic_DNA"/>
</dbReference>
<dbReference type="PIR" id="AG0307">
    <property type="entry name" value="AG0307"/>
</dbReference>
<dbReference type="RefSeq" id="YP_002347482.1">
    <property type="nucleotide sequence ID" value="NC_003143.1"/>
</dbReference>
<dbReference type="SMR" id="Q7CJ72"/>
<dbReference type="IntAct" id="Q7CJ72">
    <property type="interactions" value="3"/>
</dbReference>
<dbReference type="STRING" id="214092.YPO2519"/>
<dbReference type="PaxDb" id="214092-YPO2519"/>
<dbReference type="DNASU" id="1146615"/>
<dbReference type="EnsemblBacteria" id="AAS62537">
    <property type="protein sequence ID" value="AAS62537"/>
    <property type="gene ID" value="YP_2331"/>
</dbReference>
<dbReference type="KEGG" id="ype:YPO2519"/>
<dbReference type="KEGG" id="ypk:y1668"/>
<dbReference type="KEGG" id="ypm:YP_2331"/>
<dbReference type="PATRIC" id="fig|214092.21.peg.2936"/>
<dbReference type="eggNOG" id="COG3129">
    <property type="taxonomic scope" value="Bacteria"/>
</dbReference>
<dbReference type="HOGENOM" id="CLU_027534_3_0_6"/>
<dbReference type="OMA" id="HQGRYDF"/>
<dbReference type="OrthoDB" id="1115728at2"/>
<dbReference type="Proteomes" id="UP000000815">
    <property type="component" value="Chromosome"/>
</dbReference>
<dbReference type="Proteomes" id="UP000001019">
    <property type="component" value="Chromosome"/>
</dbReference>
<dbReference type="Proteomes" id="UP000002490">
    <property type="component" value="Chromosome"/>
</dbReference>
<dbReference type="GO" id="GO:0005737">
    <property type="term" value="C:cytoplasm"/>
    <property type="evidence" value="ECO:0007669"/>
    <property type="project" value="UniProtKB-SubCell"/>
</dbReference>
<dbReference type="GO" id="GO:0052907">
    <property type="term" value="F:23S rRNA (adenine(1618)-N(6))-methyltransferase activity"/>
    <property type="evidence" value="ECO:0000318"/>
    <property type="project" value="GO_Central"/>
</dbReference>
<dbReference type="GO" id="GO:0070475">
    <property type="term" value="P:rRNA base methylation"/>
    <property type="evidence" value="ECO:0000318"/>
    <property type="project" value="GO_Central"/>
</dbReference>
<dbReference type="CDD" id="cd02440">
    <property type="entry name" value="AdoMet_MTases"/>
    <property type="match status" value="1"/>
</dbReference>
<dbReference type="FunFam" id="3.40.50.150:FF:000045">
    <property type="entry name" value="Ribosomal RNA large subunit methyltransferase F"/>
    <property type="match status" value="1"/>
</dbReference>
<dbReference type="Gene3D" id="3.40.50.150">
    <property type="entry name" value="Vaccinia Virus protein VP39"/>
    <property type="match status" value="1"/>
</dbReference>
<dbReference type="HAMAP" id="MF_01848">
    <property type="entry name" value="23SrRNA_methyltr_F"/>
    <property type="match status" value="1"/>
</dbReference>
<dbReference type="InterPro" id="IPR010286">
    <property type="entry name" value="METTL16/RlmF"/>
</dbReference>
<dbReference type="InterPro" id="IPR016909">
    <property type="entry name" value="rRNA_lsu_MeTfrase_F"/>
</dbReference>
<dbReference type="InterPro" id="IPR029063">
    <property type="entry name" value="SAM-dependent_MTases_sf"/>
</dbReference>
<dbReference type="NCBIfam" id="NF008725">
    <property type="entry name" value="PRK11727.1"/>
    <property type="match status" value="1"/>
</dbReference>
<dbReference type="PANTHER" id="PTHR13393:SF0">
    <property type="entry name" value="RNA N6-ADENOSINE-METHYLTRANSFERASE METTL16"/>
    <property type="match status" value="1"/>
</dbReference>
<dbReference type="PANTHER" id="PTHR13393">
    <property type="entry name" value="SAM-DEPENDENT METHYLTRANSFERASE"/>
    <property type="match status" value="1"/>
</dbReference>
<dbReference type="Pfam" id="PF05971">
    <property type="entry name" value="Methyltransf_10"/>
    <property type="match status" value="1"/>
</dbReference>
<dbReference type="PIRSF" id="PIRSF029038">
    <property type="entry name" value="Mtase_YbiN_prd"/>
    <property type="match status" value="1"/>
</dbReference>
<dbReference type="SUPFAM" id="SSF53335">
    <property type="entry name" value="S-adenosyl-L-methionine-dependent methyltransferases"/>
    <property type="match status" value="1"/>
</dbReference>